<keyword id="KW-1003">Cell membrane</keyword>
<keyword id="KW-0256">Endoplasmic reticulum</keyword>
<keyword id="KW-0472">Membrane</keyword>
<keyword id="KW-0675">Receptor</keyword>
<keyword id="KW-1185">Reference proteome</keyword>
<keyword id="KW-0812">Transmembrane</keyword>
<keyword id="KW-1133">Transmembrane helix</keyword>
<keyword id="KW-0813">Transport</keyword>
<proteinExistence type="evidence at transcript level"/>
<dbReference type="EMBL" id="AK011003">
    <property type="protein sequence ID" value="BAB27322.2"/>
    <property type="molecule type" value="mRNA"/>
</dbReference>
<dbReference type="EMBL" id="BC104344">
    <property type="protein sequence ID" value="AAI04345.1"/>
    <property type="molecule type" value="mRNA"/>
</dbReference>
<dbReference type="EMBL" id="BC104345">
    <property type="protein sequence ID" value="AAI04346.1"/>
    <property type="molecule type" value="mRNA"/>
</dbReference>
<dbReference type="CCDS" id="CCDS28869.1"/>
<dbReference type="RefSeq" id="NP_081568.1">
    <property type="nucleotide sequence ID" value="NM_027292.2"/>
</dbReference>
<dbReference type="RefSeq" id="XP_017173120.1">
    <property type="nucleotide sequence ID" value="XM_017317631.2"/>
</dbReference>
<dbReference type="SMR" id="Q9CRZ8"/>
<dbReference type="FunCoup" id="Q9CRZ8">
    <property type="interactions" value="19"/>
</dbReference>
<dbReference type="STRING" id="10090.ENSMUSP00000024794"/>
<dbReference type="PhosphoSitePlus" id="Q9CRZ8"/>
<dbReference type="PaxDb" id="10090-ENSMUSP00000024794"/>
<dbReference type="ProteomicsDB" id="297730"/>
<dbReference type="Antibodypedia" id="76908">
    <property type="antibodies" value="4 antibodies from 4 providers"/>
</dbReference>
<dbReference type="DNASU" id="70026"/>
<dbReference type="Ensembl" id="ENSMUST00000024794.12">
    <property type="protein sequence ID" value="ENSMUSP00000024794.6"/>
    <property type="gene ID" value="ENSMUSG00000023995.13"/>
</dbReference>
<dbReference type="GeneID" id="70026"/>
<dbReference type="KEGG" id="mmu:70026"/>
<dbReference type="UCSC" id="uc008cxy.1">
    <property type="organism name" value="mouse"/>
</dbReference>
<dbReference type="AGR" id="MGI:1917276"/>
<dbReference type="CTD" id="222642"/>
<dbReference type="MGI" id="MGI:1917276">
    <property type="gene designation" value="Tspo2"/>
</dbReference>
<dbReference type="VEuPathDB" id="HostDB:ENSMUSG00000023995"/>
<dbReference type="eggNOG" id="KOG3797">
    <property type="taxonomic scope" value="Eukaryota"/>
</dbReference>
<dbReference type="GeneTree" id="ENSGT00390000012980"/>
<dbReference type="InParanoid" id="Q9CRZ8"/>
<dbReference type="OMA" id="RDSLCPE"/>
<dbReference type="OrthoDB" id="8841220at2759"/>
<dbReference type="PhylomeDB" id="Q9CRZ8"/>
<dbReference type="TreeFam" id="TF342852"/>
<dbReference type="BioGRID-ORCS" id="70026">
    <property type="hits" value="2 hits in 79 CRISPR screens"/>
</dbReference>
<dbReference type="ChiTaRS" id="Tspo2">
    <property type="organism name" value="mouse"/>
</dbReference>
<dbReference type="PRO" id="PR:Q9CRZ8"/>
<dbReference type="Proteomes" id="UP000000589">
    <property type="component" value="Chromosome 17"/>
</dbReference>
<dbReference type="RNAct" id="Q9CRZ8">
    <property type="molecule type" value="protein"/>
</dbReference>
<dbReference type="Bgee" id="ENSMUSG00000023995">
    <property type="expression patterns" value="Expressed in bone marrow and 51 other cell types or tissues"/>
</dbReference>
<dbReference type="ExpressionAtlas" id="Q9CRZ8">
    <property type="expression patterns" value="baseline and differential"/>
</dbReference>
<dbReference type="GO" id="GO:0005783">
    <property type="term" value="C:endoplasmic reticulum"/>
    <property type="evidence" value="ECO:0000314"/>
    <property type="project" value="UniProtKB"/>
</dbReference>
<dbReference type="GO" id="GO:0005789">
    <property type="term" value="C:endoplasmic reticulum membrane"/>
    <property type="evidence" value="ECO:0007669"/>
    <property type="project" value="UniProtKB-SubCell"/>
</dbReference>
<dbReference type="GO" id="GO:0005886">
    <property type="term" value="C:plasma membrane"/>
    <property type="evidence" value="ECO:0000250"/>
    <property type="project" value="UniProtKB"/>
</dbReference>
<dbReference type="GO" id="GO:0140485">
    <property type="term" value="F:5-aminolevulinic acid transmembrane transporter activity"/>
    <property type="evidence" value="ECO:0000250"/>
    <property type="project" value="UniProtKB"/>
</dbReference>
<dbReference type="GO" id="GO:0015485">
    <property type="term" value="F:cholesterol binding"/>
    <property type="evidence" value="ECO:0000314"/>
    <property type="project" value="UniProtKB"/>
</dbReference>
<dbReference type="GO" id="GO:0140484">
    <property type="term" value="P:5-aminolevulinic acid import across plasma membrane"/>
    <property type="evidence" value="ECO:0000250"/>
    <property type="project" value="UniProtKB"/>
</dbReference>
<dbReference type="GO" id="GO:0043353">
    <property type="term" value="P:enucleate erythrocyte differentiation"/>
    <property type="evidence" value="ECO:0000315"/>
    <property type="project" value="UniProtKB"/>
</dbReference>
<dbReference type="GO" id="GO:0098739">
    <property type="term" value="P:import across plasma membrane"/>
    <property type="evidence" value="ECO:0000250"/>
    <property type="project" value="UniProtKB"/>
</dbReference>
<dbReference type="GO" id="GO:0032367">
    <property type="term" value="P:intracellular cholesterol transport"/>
    <property type="evidence" value="ECO:0000315"/>
    <property type="project" value="UniProtKB"/>
</dbReference>
<dbReference type="GO" id="GO:0034389">
    <property type="term" value="P:lipid droplet organization"/>
    <property type="evidence" value="ECO:0000315"/>
    <property type="project" value="UniProtKB"/>
</dbReference>
<dbReference type="FunFam" id="1.20.1260.100:FF:000001">
    <property type="entry name" value="translocator protein 2"/>
    <property type="match status" value="1"/>
</dbReference>
<dbReference type="Gene3D" id="1.20.1260.100">
    <property type="entry name" value="TspO/MBR protein"/>
    <property type="match status" value="1"/>
</dbReference>
<dbReference type="InterPro" id="IPR038330">
    <property type="entry name" value="TspO/MBR-related_sf"/>
</dbReference>
<dbReference type="InterPro" id="IPR004307">
    <property type="entry name" value="TspO_MBR"/>
</dbReference>
<dbReference type="PANTHER" id="PTHR10057">
    <property type="entry name" value="PERIPHERAL-TYPE BENZODIAZEPINE RECEPTOR"/>
    <property type="match status" value="1"/>
</dbReference>
<dbReference type="PANTHER" id="PTHR10057:SF4">
    <property type="entry name" value="TRANSLOCATOR PROTEIN 2"/>
    <property type="match status" value="1"/>
</dbReference>
<dbReference type="Pfam" id="PF03073">
    <property type="entry name" value="TspO_MBR"/>
    <property type="match status" value="1"/>
</dbReference>
<dbReference type="PIRSF" id="PIRSF005859">
    <property type="entry name" value="PBR"/>
    <property type="match status" value="1"/>
</dbReference>
<evidence type="ECO:0000250" key="1">
    <source>
        <dbReference type="UniProtKB" id="Q5TGU0"/>
    </source>
</evidence>
<evidence type="ECO:0000255" key="2"/>
<evidence type="ECO:0000269" key="3">
    <source>
    </source>
</evidence>
<evidence type="ECO:0000269" key="4">
    <source>
    </source>
</evidence>
<evidence type="ECO:0000305" key="5"/>
<sequence>MQLQGPVFVGVPLLGPILICMLIHQPSSRCEDERKLPWCPPHKVILLVWVTIYSVMGYASYLVWKELGGGFRWPLALPLGLYSFQLALSWTFLVLFLAADSPGLALLDLLLLYGLVASLVFIWQPINKLAALLLLPYLAWLTVTTAITYRLWRDSLCPTYQP</sequence>
<accession>Q9CRZ8</accession>
<gene>
    <name type="primary">Tspo2</name>
    <name type="synonym">Bzrpl1</name>
</gene>
<comment type="function">
    <text evidence="1 3 4">Cholesterol-binding protein involved in the redistribution of cholesterol from lipid droplets to the endoplasmic reticulum (PubMed:19729679, PubMed:32358067). Required to meet cholesterol demands during erythropoietic differentiation (PubMed:19729679, PubMed:32358067). May play a role in transport processes at the plasma membrane of erythrocytes, including regulating VDAC-mediated ATP export, and import of the heme precursors protoporphyrin IX and 5-aminolevulinic acid (By similarity).</text>
</comment>
<comment type="subunit">
    <text evidence="1">Homotetramer. May also form homodimer.</text>
</comment>
<comment type="subcellular location">
    <subcellularLocation>
        <location evidence="3">Endoplasmic reticulum membrane</location>
        <topology evidence="3">Multi-pass membrane protein</topology>
    </subcellularLocation>
    <subcellularLocation>
        <location evidence="1">Cell membrane</location>
        <topology>Multi-pass membrane protein</topology>
    </subcellularLocation>
    <text evidence="1">Localizes to the plasma membrane and intracellular membranes in developing and mature erythrocytes.</text>
</comment>
<comment type="tissue specificity">
    <text evidence="3">Expressed in liver, bone marrow and spleen. In spleen, detected in red pulp but not in white pulp.</text>
</comment>
<comment type="developmental stage">
    <text evidence="3">Not expressed at 10.5 dpc. First detected at 12.5 dpc in the primordial liver (PubMed:19729679). Increased hepatic levels are found at 15.5 dpc followed by decline throughout newborn stage P1 and postnatal stages P5 and P10 with no hepatic expression in the adult (PubMed:19729679). In bone marrow, expressed during late gestation stages and remains elevated until adulthood (PubMed:19729679). In newborn and adult mice, also expressed in spleen (PubMed:19729679).</text>
</comment>
<comment type="domain">
    <text evidence="3">The C-terminal region mediates cholesterol-binding.</text>
</comment>
<comment type="disruption phenotype">
    <text evidence="4">Decreases erythrocyte count and increases reticulocyte count (PubMed:32358067). Abnormal erythroblast cytokinesis and differentiation (PubMed:32358067). Decreases hemoglobin levels in maturing erythroid cells (PubMed:32358067).</text>
</comment>
<comment type="similarity">
    <text evidence="5">Belongs to the TspO/BZRP family.</text>
</comment>
<protein>
    <recommendedName>
        <fullName>Translocator protein 2</fullName>
    </recommendedName>
    <alternativeName>
        <fullName>Peripheral-type benzodiazepine receptor-like protein 1</fullName>
    </alternativeName>
</protein>
<reference key="1">
    <citation type="journal article" date="2005" name="Science">
        <title>The transcriptional landscape of the mammalian genome.</title>
        <authorList>
            <person name="Carninci P."/>
            <person name="Kasukawa T."/>
            <person name="Katayama S."/>
            <person name="Gough J."/>
            <person name="Frith M.C."/>
            <person name="Maeda N."/>
            <person name="Oyama R."/>
            <person name="Ravasi T."/>
            <person name="Lenhard B."/>
            <person name="Wells C."/>
            <person name="Kodzius R."/>
            <person name="Shimokawa K."/>
            <person name="Bajic V.B."/>
            <person name="Brenner S.E."/>
            <person name="Batalov S."/>
            <person name="Forrest A.R."/>
            <person name="Zavolan M."/>
            <person name="Davis M.J."/>
            <person name="Wilming L.G."/>
            <person name="Aidinis V."/>
            <person name="Allen J.E."/>
            <person name="Ambesi-Impiombato A."/>
            <person name="Apweiler R."/>
            <person name="Aturaliya R.N."/>
            <person name="Bailey T.L."/>
            <person name="Bansal M."/>
            <person name="Baxter L."/>
            <person name="Beisel K.W."/>
            <person name="Bersano T."/>
            <person name="Bono H."/>
            <person name="Chalk A.M."/>
            <person name="Chiu K.P."/>
            <person name="Choudhary V."/>
            <person name="Christoffels A."/>
            <person name="Clutterbuck D.R."/>
            <person name="Crowe M.L."/>
            <person name="Dalla E."/>
            <person name="Dalrymple B.P."/>
            <person name="de Bono B."/>
            <person name="Della Gatta G."/>
            <person name="di Bernardo D."/>
            <person name="Down T."/>
            <person name="Engstrom P."/>
            <person name="Fagiolini M."/>
            <person name="Faulkner G."/>
            <person name="Fletcher C.F."/>
            <person name="Fukushima T."/>
            <person name="Furuno M."/>
            <person name="Futaki S."/>
            <person name="Gariboldi M."/>
            <person name="Georgii-Hemming P."/>
            <person name="Gingeras T.R."/>
            <person name="Gojobori T."/>
            <person name="Green R.E."/>
            <person name="Gustincich S."/>
            <person name="Harbers M."/>
            <person name="Hayashi Y."/>
            <person name="Hensch T.K."/>
            <person name="Hirokawa N."/>
            <person name="Hill D."/>
            <person name="Huminiecki L."/>
            <person name="Iacono M."/>
            <person name="Ikeo K."/>
            <person name="Iwama A."/>
            <person name="Ishikawa T."/>
            <person name="Jakt M."/>
            <person name="Kanapin A."/>
            <person name="Katoh M."/>
            <person name="Kawasawa Y."/>
            <person name="Kelso J."/>
            <person name="Kitamura H."/>
            <person name="Kitano H."/>
            <person name="Kollias G."/>
            <person name="Krishnan S.P."/>
            <person name="Kruger A."/>
            <person name="Kummerfeld S.K."/>
            <person name="Kurochkin I.V."/>
            <person name="Lareau L.F."/>
            <person name="Lazarevic D."/>
            <person name="Lipovich L."/>
            <person name="Liu J."/>
            <person name="Liuni S."/>
            <person name="McWilliam S."/>
            <person name="Madan Babu M."/>
            <person name="Madera M."/>
            <person name="Marchionni L."/>
            <person name="Matsuda H."/>
            <person name="Matsuzawa S."/>
            <person name="Miki H."/>
            <person name="Mignone F."/>
            <person name="Miyake S."/>
            <person name="Morris K."/>
            <person name="Mottagui-Tabar S."/>
            <person name="Mulder N."/>
            <person name="Nakano N."/>
            <person name="Nakauchi H."/>
            <person name="Ng P."/>
            <person name="Nilsson R."/>
            <person name="Nishiguchi S."/>
            <person name="Nishikawa S."/>
            <person name="Nori F."/>
            <person name="Ohara O."/>
            <person name="Okazaki Y."/>
            <person name="Orlando V."/>
            <person name="Pang K.C."/>
            <person name="Pavan W.J."/>
            <person name="Pavesi G."/>
            <person name="Pesole G."/>
            <person name="Petrovsky N."/>
            <person name="Piazza S."/>
            <person name="Reed J."/>
            <person name="Reid J.F."/>
            <person name="Ring B.Z."/>
            <person name="Ringwald M."/>
            <person name="Rost B."/>
            <person name="Ruan Y."/>
            <person name="Salzberg S.L."/>
            <person name="Sandelin A."/>
            <person name="Schneider C."/>
            <person name="Schoenbach C."/>
            <person name="Sekiguchi K."/>
            <person name="Semple C.A."/>
            <person name="Seno S."/>
            <person name="Sessa L."/>
            <person name="Sheng Y."/>
            <person name="Shibata Y."/>
            <person name="Shimada H."/>
            <person name="Shimada K."/>
            <person name="Silva D."/>
            <person name="Sinclair B."/>
            <person name="Sperling S."/>
            <person name="Stupka E."/>
            <person name="Sugiura K."/>
            <person name="Sultana R."/>
            <person name="Takenaka Y."/>
            <person name="Taki K."/>
            <person name="Tammoja K."/>
            <person name="Tan S.L."/>
            <person name="Tang S."/>
            <person name="Taylor M.S."/>
            <person name="Tegner J."/>
            <person name="Teichmann S.A."/>
            <person name="Ueda H.R."/>
            <person name="van Nimwegen E."/>
            <person name="Verardo R."/>
            <person name="Wei C.L."/>
            <person name="Yagi K."/>
            <person name="Yamanishi H."/>
            <person name="Zabarovsky E."/>
            <person name="Zhu S."/>
            <person name="Zimmer A."/>
            <person name="Hide W."/>
            <person name="Bult C."/>
            <person name="Grimmond S.M."/>
            <person name="Teasdale R.D."/>
            <person name="Liu E.T."/>
            <person name="Brusic V."/>
            <person name="Quackenbush J."/>
            <person name="Wahlestedt C."/>
            <person name="Mattick J.S."/>
            <person name="Hume D.A."/>
            <person name="Kai C."/>
            <person name="Sasaki D."/>
            <person name="Tomaru Y."/>
            <person name="Fukuda S."/>
            <person name="Kanamori-Katayama M."/>
            <person name="Suzuki M."/>
            <person name="Aoki J."/>
            <person name="Arakawa T."/>
            <person name="Iida J."/>
            <person name="Imamura K."/>
            <person name="Itoh M."/>
            <person name="Kato T."/>
            <person name="Kawaji H."/>
            <person name="Kawagashira N."/>
            <person name="Kawashima T."/>
            <person name="Kojima M."/>
            <person name="Kondo S."/>
            <person name="Konno H."/>
            <person name="Nakano K."/>
            <person name="Ninomiya N."/>
            <person name="Nishio T."/>
            <person name="Okada M."/>
            <person name="Plessy C."/>
            <person name="Shibata K."/>
            <person name="Shiraki T."/>
            <person name="Suzuki S."/>
            <person name="Tagami M."/>
            <person name="Waki K."/>
            <person name="Watahiki A."/>
            <person name="Okamura-Oho Y."/>
            <person name="Suzuki H."/>
            <person name="Kawai J."/>
            <person name="Hayashizaki Y."/>
        </authorList>
    </citation>
    <scope>NUCLEOTIDE SEQUENCE [LARGE SCALE MRNA]</scope>
    <source>
        <strain>C57BL/6J</strain>
        <tissue>Liver</tissue>
    </source>
</reference>
<reference key="2">
    <citation type="journal article" date="2004" name="Genome Res.">
        <title>The status, quality, and expansion of the NIH full-length cDNA project: the Mammalian Gene Collection (MGC).</title>
        <authorList>
            <consortium name="The MGC Project Team"/>
        </authorList>
    </citation>
    <scope>NUCLEOTIDE SEQUENCE [LARGE SCALE MRNA]</scope>
</reference>
<reference key="3">
    <citation type="journal article" date="2009" name="J. Biol. Chem.">
        <title>Translocator protein 2 is involved in cholesterol redistribution during erythropoiesis.</title>
        <authorList>
            <person name="Fan J."/>
            <person name="Rone M.B."/>
            <person name="Papadopoulos V."/>
        </authorList>
    </citation>
    <scope>FUNCTION</scope>
    <scope>SUBCELLULAR LOCATION</scope>
    <scope>TISSUE SPECIFICITY</scope>
    <scope>DEVELOPMENTAL STAGE</scope>
    <scope>DOMAIN</scope>
</reference>
<reference key="4">
    <citation type="journal article" date="2020" name="J. Biol. Chem.">
        <title>Cholesterol-binding protein TSPO2 coordinates maturation and proliferation of terminally differentiating erythroblasts.</title>
        <authorList>
            <person name="Kiatpakdee B."/>
            <person name="Sato K."/>
            <person name="Otsuka Y."/>
            <person name="Arashiki N."/>
            <person name="Chen Y."/>
            <person name="Tsumita T."/>
            <person name="Otsu W."/>
            <person name="Yamamoto A."/>
            <person name="Kawata R."/>
            <person name="Yamazaki J."/>
            <person name="Sugimoto Y."/>
            <person name="Takada K."/>
            <person name="Mohandas N."/>
            <person name="Inaba M."/>
        </authorList>
    </citation>
    <scope>FUNCTION</scope>
    <scope>DISRUPTION PHENOTYPE</scope>
</reference>
<name>TSPO2_MOUSE</name>
<organism>
    <name type="scientific">Mus musculus</name>
    <name type="common">Mouse</name>
    <dbReference type="NCBI Taxonomy" id="10090"/>
    <lineage>
        <taxon>Eukaryota</taxon>
        <taxon>Metazoa</taxon>
        <taxon>Chordata</taxon>
        <taxon>Craniata</taxon>
        <taxon>Vertebrata</taxon>
        <taxon>Euteleostomi</taxon>
        <taxon>Mammalia</taxon>
        <taxon>Eutheria</taxon>
        <taxon>Euarchontoglires</taxon>
        <taxon>Glires</taxon>
        <taxon>Rodentia</taxon>
        <taxon>Myomorpha</taxon>
        <taxon>Muroidea</taxon>
        <taxon>Muridae</taxon>
        <taxon>Murinae</taxon>
        <taxon>Mus</taxon>
        <taxon>Mus</taxon>
    </lineage>
</organism>
<feature type="chain" id="PRO_0000292006" description="Translocator protein 2">
    <location>
        <begin position="1"/>
        <end position="162"/>
    </location>
</feature>
<feature type="transmembrane region" description="Helical" evidence="2">
    <location>
        <begin position="3"/>
        <end position="23"/>
    </location>
</feature>
<feature type="transmembrane region" description="Helical" evidence="2">
    <location>
        <begin position="44"/>
        <end position="64"/>
    </location>
</feature>
<feature type="transmembrane region" description="Helical" evidence="2">
    <location>
        <begin position="79"/>
        <end position="99"/>
    </location>
</feature>
<feature type="transmembrane region" description="Helical" evidence="2">
    <location>
        <begin position="103"/>
        <end position="123"/>
    </location>
</feature>
<feature type="transmembrane region" description="Helical" evidence="2">
    <location>
        <begin position="129"/>
        <end position="149"/>
    </location>
</feature>